<dbReference type="EMBL" id="AK125726">
    <property type="protein sequence ID" value="BAC86260.1"/>
    <property type="molecule type" value="mRNA"/>
</dbReference>
<dbReference type="GlyGen" id="Q6ZUG5">
    <property type="glycosylation" value="1 site, 1 O-linked glycan (1 site)"/>
</dbReference>
<dbReference type="BioMuta" id="-"/>
<dbReference type="DMDM" id="74711973"/>
<dbReference type="jPOST" id="Q6ZUG5"/>
<dbReference type="MassIVE" id="Q6ZUG5"/>
<dbReference type="PaxDb" id="9606-ENSP00000424951"/>
<dbReference type="PeptideAtlas" id="Q6ZUG5"/>
<dbReference type="UCSC" id="uc062nph.1">
    <property type="organism name" value="human"/>
</dbReference>
<dbReference type="AGR" id="HGNC:29231"/>
<dbReference type="neXtProt" id="NX_Q6ZUG5"/>
<dbReference type="eggNOG" id="ENOG502QU03">
    <property type="taxonomic scope" value="Eukaryota"/>
</dbReference>
<dbReference type="HOGENOM" id="CLU_009822_1_0_1"/>
<dbReference type="InParanoid" id="Q6ZUG5"/>
<dbReference type="PAN-GO" id="Q6ZUG5">
    <property type="GO annotations" value="0 GO annotations based on evolutionary models"/>
</dbReference>
<dbReference type="PhylomeDB" id="Q6ZUG5"/>
<dbReference type="Pharos" id="Q6ZUG5">
    <property type="development level" value="Tdark"/>
</dbReference>
<dbReference type="Proteomes" id="UP000005640">
    <property type="component" value="Unplaced"/>
</dbReference>
<dbReference type="RNAct" id="Q6ZUG5">
    <property type="molecule type" value="protein"/>
</dbReference>
<dbReference type="PANTHER" id="PTHR33667:SF7">
    <property type="entry name" value="RIKEN CDNA 1810020O05 GENE"/>
    <property type="match status" value="1"/>
</dbReference>
<dbReference type="PANTHER" id="PTHR33667">
    <property type="entry name" value="SI:DKEY-57N24.6"/>
    <property type="match status" value="1"/>
</dbReference>
<name>YC006_HUMAN</name>
<reference key="1">
    <citation type="journal article" date="2004" name="Nat. Genet.">
        <title>Complete sequencing and characterization of 21,243 full-length human cDNAs.</title>
        <authorList>
            <person name="Ota T."/>
            <person name="Suzuki Y."/>
            <person name="Nishikawa T."/>
            <person name="Otsuki T."/>
            <person name="Sugiyama T."/>
            <person name="Irie R."/>
            <person name="Wakamatsu A."/>
            <person name="Hayashi K."/>
            <person name="Sato H."/>
            <person name="Nagai K."/>
            <person name="Kimura K."/>
            <person name="Makita H."/>
            <person name="Sekine M."/>
            <person name="Obayashi M."/>
            <person name="Nishi T."/>
            <person name="Shibahara T."/>
            <person name="Tanaka T."/>
            <person name="Ishii S."/>
            <person name="Yamamoto J."/>
            <person name="Saito K."/>
            <person name="Kawai Y."/>
            <person name="Isono Y."/>
            <person name="Nakamura Y."/>
            <person name="Nagahari K."/>
            <person name="Murakami K."/>
            <person name="Yasuda T."/>
            <person name="Iwayanagi T."/>
            <person name="Wagatsuma M."/>
            <person name="Shiratori A."/>
            <person name="Sudo H."/>
            <person name="Hosoiri T."/>
            <person name="Kaku Y."/>
            <person name="Kodaira H."/>
            <person name="Kondo H."/>
            <person name="Sugawara M."/>
            <person name="Takahashi M."/>
            <person name="Kanda K."/>
            <person name="Yokoi T."/>
            <person name="Furuya T."/>
            <person name="Kikkawa E."/>
            <person name="Omura Y."/>
            <person name="Abe K."/>
            <person name="Kamihara K."/>
            <person name="Katsuta N."/>
            <person name="Sato K."/>
            <person name="Tanikawa M."/>
            <person name="Yamazaki M."/>
            <person name="Ninomiya K."/>
            <person name="Ishibashi T."/>
            <person name="Yamashita H."/>
            <person name="Murakawa K."/>
            <person name="Fujimori K."/>
            <person name="Tanai H."/>
            <person name="Kimata M."/>
            <person name="Watanabe M."/>
            <person name="Hiraoka S."/>
            <person name="Chiba Y."/>
            <person name="Ishida S."/>
            <person name="Ono Y."/>
            <person name="Takiguchi S."/>
            <person name="Watanabe S."/>
            <person name="Yosida M."/>
            <person name="Hotuta T."/>
            <person name="Kusano J."/>
            <person name="Kanehori K."/>
            <person name="Takahashi-Fujii A."/>
            <person name="Hara H."/>
            <person name="Tanase T.-O."/>
            <person name="Nomura Y."/>
            <person name="Togiya S."/>
            <person name="Komai F."/>
            <person name="Hara R."/>
            <person name="Takeuchi K."/>
            <person name="Arita M."/>
            <person name="Imose N."/>
            <person name="Musashino K."/>
            <person name="Yuuki H."/>
            <person name="Oshima A."/>
            <person name="Sasaki N."/>
            <person name="Aotsuka S."/>
            <person name="Yoshikawa Y."/>
            <person name="Matsunawa H."/>
            <person name="Ichihara T."/>
            <person name="Shiohata N."/>
            <person name="Sano S."/>
            <person name="Moriya S."/>
            <person name="Momiyama H."/>
            <person name="Satoh N."/>
            <person name="Takami S."/>
            <person name="Terashima Y."/>
            <person name="Suzuki O."/>
            <person name="Nakagawa S."/>
            <person name="Senoh A."/>
            <person name="Mizoguchi H."/>
            <person name="Goto Y."/>
            <person name="Shimizu F."/>
            <person name="Wakebe H."/>
            <person name="Hishigaki H."/>
            <person name="Watanabe T."/>
            <person name="Sugiyama A."/>
            <person name="Takemoto M."/>
            <person name="Kawakami B."/>
            <person name="Yamazaki M."/>
            <person name="Watanabe K."/>
            <person name="Kumagai A."/>
            <person name="Itakura S."/>
            <person name="Fukuzumi Y."/>
            <person name="Fujimori Y."/>
            <person name="Komiyama M."/>
            <person name="Tashiro H."/>
            <person name="Tanigami A."/>
            <person name="Fujiwara T."/>
            <person name="Ono T."/>
            <person name="Yamada K."/>
            <person name="Fujii Y."/>
            <person name="Ozaki K."/>
            <person name="Hirao M."/>
            <person name="Ohmori Y."/>
            <person name="Kawabata A."/>
            <person name="Hikiji T."/>
            <person name="Kobatake N."/>
            <person name="Inagaki H."/>
            <person name="Ikema Y."/>
            <person name="Okamoto S."/>
            <person name="Okitani R."/>
            <person name="Kawakami T."/>
            <person name="Noguchi S."/>
            <person name="Itoh T."/>
            <person name="Shigeta K."/>
            <person name="Senba T."/>
            <person name="Matsumura K."/>
            <person name="Nakajima Y."/>
            <person name="Mizuno T."/>
            <person name="Morinaga M."/>
            <person name="Sasaki M."/>
            <person name="Togashi T."/>
            <person name="Oyama M."/>
            <person name="Hata H."/>
            <person name="Watanabe M."/>
            <person name="Komatsu T."/>
            <person name="Mizushima-Sugano J."/>
            <person name="Satoh T."/>
            <person name="Shirai Y."/>
            <person name="Takahashi Y."/>
            <person name="Nakagawa K."/>
            <person name="Okumura K."/>
            <person name="Nagase T."/>
            <person name="Nomura N."/>
            <person name="Kikuchi H."/>
            <person name="Masuho Y."/>
            <person name="Yamashita R."/>
            <person name="Nakai K."/>
            <person name="Yada T."/>
            <person name="Nakamura Y."/>
            <person name="Ohara O."/>
            <person name="Isogai T."/>
            <person name="Sugano S."/>
        </authorList>
    </citation>
    <scope>NUCLEOTIDE SEQUENCE [LARGE SCALE MRNA]</scope>
    <source>
        <tissue>Testis</tissue>
    </source>
</reference>
<feature type="chain" id="PRO_0000319050" description="Uncharacterized protein FLJ43738">
    <location>
        <begin position="1"/>
        <end position="572"/>
    </location>
</feature>
<feature type="region of interest" description="Disordered" evidence="1">
    <location>
        <begin position="553"/>
        <end position="572"/>
    </location>
</feature>
<feature type="compositionally biased region" description="Basic residues" evidence="1">
    <location>
        <begin position="561"/>
        <end position="572"/>
    </location>
</feature>
<sequence length="572" mass="66039">MPVYCKYQFHKTPVHKTKGEPHGTHVYFQDINVIFLGALHPSDLREYLEGPPMVVEVHDRDRKSEECSQKPVLFGEDPLDSYLNFQALISPRETENNPFESQNKMWYPYGIAQVSFADLLLGHKYLNLAVPIHSCEVQPTHCGQDSRRRKVVGLGVPRDGHQHGPMPRGNYLEADSQLKLRVDIAVPLRAGARAADPDLGGSQFGRIIFVFDFKKVSLLHSLLQDITMINAKALGLDSYPVRTLQQILSAFKVRVRVQEQQHLDVLTGFHLLDGKTHLFILEGLADQGLRQLWENHQSWIPRSEHRKYKVLYNSQLLFRSRLYGDLEAILYHVHLFQPTELLLQQAVFFLRDTERRRVFQALARIHDICYNSTTLWDVTVRDLLPSSAMIKDLSQEFGMPLSQEELTDEKLFALPPQPAPNLEDYHSRNSTLTLEIHAHQEPRKRFTYSQDYLSAMVEPLDLKEEEKKAQKKSRQAWLTARGFQVTGLQSDTESSFQDLKLPPIKELNEEWKENSLFANVLEPVLDRDRWSWDRHHVDFDLYKKPPPFLELLPSPAPKPVTVRKKKGNSPIS</sequence>
<evidence type="ECO:0000256" key="1">
    <source>
        <dbReference type="SAM" id="MobiDB-lite"/>
    </source>
</evidence>
<protein>
    <recommendedName>
        <fullName>Uncharacterized protein FLJ43738</fullName>
    </recommendedName>
</protein>
<keyword id="KW-1267">Proteomics identification</keyword>
<keyword id="KW-1185">Reference proteome</keyword>
<organism>
    <name type="scientific">Homo sapiens</name>
    <name type="common">Human</name>
    <dbReference type="NCBI Taxonomy" id="9606"/>
    <lineage>
        <taxon>Eukaryota</taxon>
        <taxon>Metazoa</taxon>
        <taxon>Chordata</taxon>
        <taxon>Craniata</taxon>
        <taxon>Vertebrata</taxon>
        <taxon>Euteleostomi</taxon>
        <taxon>Mammalia</taxon>
        <taxon>Eutheria</taxon>
        <taxon>Euarchontoglires</taxon>
        <taxon>Primates</taxon>
        <taxon>Haplorrhini</taxon>
        <taxon>Catarrhini</taxon>
        <taxon>Hominidae</taxon>
        <taxon>Homo</taxon>
    </lineage>
</organism>
<proteinExistence type="evidence at protein level"/>
<accession>Q6ZUG5</accession>